<organism>
    <name type="scientific">Mycolicibacterium gilvum (strain PYR-GCK)</name>
    <name type="common">Mycobacterium gilvum (strain PYR-GCK)</name>
    <dbReference type="NCBI Taxonomy" id="350054"/>
    <lineage>
        <taxon>Bacteria</taxon>
        <taxon>Bacillati</taxon>
        <taxon>Actinomycetota</taxon>
        <taxon>Actinomycetes</taxon>
        <taxon>Mycobacteriales</taxon>
        <taxon>Mycobacteriaceae</taxon>
        <taxon>Mycolicibacterium</taxon>
    </lineage>
</organism>
<protein>
    <recommendedName>
        <fullName evidence="1">3-isopropylmalate dehydrogenase</fullName>
        <ecNumber evidence="1">1.1.1.85</ecNumber>
    </recommendedName>
    <alternativeName>
        <fullName evidence="1">3-IPM-DH</fullName>
    </alternativeName>
    <alternativeName>
        <fullName evidence="1">Beta-IPM dehydrogenase</fullName>
        <shortName evidence="1">IMDH</shortName>
    </alternativeName>
</protein>
<keyword id="KW-0028">Amino-acid biosynthesis</keyword>
<keyword id="KW-0100">Branched-chain amino acid biosynthesis</keyword>
<keyword id="KW-0963">Cytoplasm</keyword>
<keyword id="KW-0432">Leucine biosynthesis</keyword>
<keyword id="KW-0460">Magnesium</keyword>
<keyword id="KW-0464">Manganese</keyword>
<keyword id="KW-0479">Metal-binding</keyword>
<keyword id="KW-0520">NAD</keyword>
<keyword id="KW-0560">Oxidoreductase</keyword>
<accession>A4TE12</accession>
<name>LEU3_MYCGI</name>
<gene>
    <name evidence="1" type="primary">leuB</name>
    <name type="ordered locus">Mflv_4233</name>
</gene>
<feature type="chain" id="PRO_1000084278" description="3-isopropylmalate dehydrogenase">
    <location>
        <begin position="1"/>
        <end position="336"/>
    </location>
</feature>
<feature type="binding site" evidence="1">
    <location>
        <position position="87"/>
    </location>
    <ligand>
        <name>substrate</name>
    </ligand>
</feature>
<feature type="binding site" evidence="1">
    <location>
        <position position="97"/>
    </location>
    <ligand>
        <name>substrate</name>
    </ligand>
</feature>
<feature type="binding site" evidence="1">
    <location>
        <position position="121"/>
    </location>
    <ligand>
        <name>substrate</name>
    </ligand>
</feature>
<feature type="binding site" evidence="1">
    <location>
        <position position="211"/>
    </location>
    <ligand>
        <name>Mg(2+)</name>
        <dbReference type="ChEBI" id="CHEBI:18420"/>
    </ligand>
</feature>
<feature type="binding site" evidence="1">
    <location>
        <position position="211"/>
    </location>
    <ligand>
        <name>substrate</name>
    </ligand>
</feature>
<feature type="binding site" evidence="1">
    <location>
        <position position="235"/>
    </location>
    <ligand>
        <name>Mg(2+)</name>
        <dbReference type="ChEBI" id="CHEBI:18420"/>
    </ligand>
</feature>
<feature type="binding site" evidence="1">
    <location>
        <position position="239"/>
    </location>
    <ligand>
        <name>Mg(2+)</name>
        <dbReference type="ChEBI" id="CHEBI:18420"/>
    </ligand>
</feature>
<feature type="binding site" evidence="1">
    <location>
        <begin position="271"/>
        <end position="283"/>
    </location>
    <ligand>
        <name>NAD(+)</name>
        <dbReference type="ChEBI" id="CHEBI:57540"/>
    </ligand>
</feature>
<feature type="site" description="Important for catalysis" evidence="1">
    <location>
        <position position="128"/>
    </location>
</feature>
<feature type="site" description="Important for catalysis" evidence="1">
    <location>
        <position position="178"/>
    </location>
</feature>
<proteinExistence type="inferred from homology"/>
<evidence type="ECO:0000255" key="1">
    <source>
        <dbReference type="HAMAP-Rule" id="MF_01035"/>
    </source>
</evidence>
<comment type="function">
    <text evidence="1">Catalyzes the oxidation of 3-carboxy-2-hydroxy-4-methylpentanoate (3-isopropylmalate) to 3-carboxy-4-methyl-2-oxopentanoate. The product decarboxylates to 4-methyl-2 oxopentanoate.</text>
</comment>
<comment type="catalytic activity">
    <reaction evidence="1">
        <text>(2R,3S)-3-isopropylmalate + NAD(+) = 4-methyl-2-oxopentanoate + CO2 + NADH</text>
        <dbReference type="Rhea" id="RHEA:32271"/>
        <dbReference type="ChEBI" id="CHEBI:16526"/>
        <dbReference type="ChEBI" id="CHEBI:17865"/>
        <dbReference type="ChEBI" id="CHEBI:35121"/>
        <dbReference type="ChEBI" id="CHEBI:57540"/>
        <dbReference type="ChEBI" id="CHEBI:57945"/>
        <dbReference type="EC" id="1.1.1.85"/>
    </reaction>
</comment>
<comment type="cofactor">
    <cofactor evidence="1">
        <name>Mg(2+)</name>
        <dbReference type="ChEBI" id="CHEBI:18420"/>
    </cofactor>
    <cofactor evidence="1">
        <name>Mn(2+)</name>
        <dbReference type="ChEBI" id="CHEBI:29035"/>
    </cofactor>
    <text evidence="1">Binds 1 Mg(2+) or Mn(2+) ion per subunit.</text>
</comment>
<comment type="pathway">
    <text evidence="1">Amino-acid biosynthesis; L-leucine biosynthesis; L-leucine from 3-methyl-2-oxobutanoate: step 3/4.</text>
</comment>
<comment type="subunit">
    <text evidence="1">Homodimer.</text>
</comment>
<comment type="subcellular location">
    <subcellularLocation>
        <location evidence="1">Cytoplasm</location>
    </subcellularLocation>
</comment>
<comment type="similarity">
    <text evidence="1">Belongs to the isocitrate and isopropylmalate dehydrogenases family. LeuB type 2 subfamily.</text>
</comment>
<reference key="1">
    <citation type="submission" date="2007-04" db="EMBL/GenBank/DDBJ databases">
        <title>Complete sequence of chromosome of Mycobacterium gilvum PYR-GCK.</title>
        <authorList>
            <consortium name="US DOE Joint Genome Institute"/>
            <person name="Copeland A."/>
            <person name="Lucas S."/>
            <person name="Lapidus A."/>
            <person name="Barry K."/>
            <person name="Detter J.C."/>
            <person name="Glavina del Rio T."/>
            <person name="Hammon N."/>
            <person name="Israni S."/>
            <person name="Dalin E."/>
            <person name="Tice H."/>
            <person name="Pitluck S."/>
            <person name="Chain P."/>
            <person name="Malfatti S."/>
            <person name="Shin M."/>
            <person name="Vergez L."/>
            <person name="Schmutz J."/>
            <person name="Larimer F."/>
            <person name="Land M."/>
            <person name="Hauser L."/>
            <person name="Kyrpides N."/>
            <person name="Mikhailova N."/>
            <person name="Miller C."/>
            <person name="Richardson P."/>
        </authorList>
    </citation>
    <scope>NUCLEOTIDE SEQUENCE [LARGE SCALE GENOMIC DNA]</scope>
    <source>
        <strain>PYR-GCK</strain>
    </source>
</reference>
<sequence length="336" mass="35692">MKLAVIAGDGIGPEVIGEALRVLDAVVPGVEKTEYDLGARLYHRTGEVLPDSVLDELKGHDAILLGAIGDPSMPSGVLERGLLLRIRFELDHHINLRPGRLYPGVQSPLAGNPEIDFVVVREGTEGPYTGNGGAIRVGTPHEIATEVSVNTAYGVRRVVQDAFKRAQQRRKHLTLVHKNNVLTNAGSLWWRTVQAVAAEYPEVEVAYQHVDAATIHMVTDPGRFDVIVTDNLFGDIITDLAAAVCGGIGLAASGNIDATLTNPSMFEPVHGSAPDIAGQGIADPTAAIMSVSLLLAHMAEIDAAARVDKAVAEHLATRGDEKLSTTQVGDRILGKL</sequence>
<dbReference type="EC" id="1.1.1.85" evidence="1"/>
<dbReference type="EMBL" id="CP000656">
    <property type="protein sequence ID" value="ABP46702.1"/>
    <property type="molecule type" value="Genomic_DNA"/>
</dbReference>
<dbReference type="SMR" id="A4TE12"/>
<dbReference type="STRING" id="350054.Mflv_4233"/>
<dbReference type="KEGG" id="mgi:Mflv_4233"/>
<dbReference type="eggNOG" id="COG0473">
    <property type="taxonomic scope" value="Bacteria"/>
</dbReference>
<dbReference type="HOGENOM" id="CLU_031953_0_1_11"/>
<dbReference type="OrthoDB" id="5289857at2"/>
<dbReference type="UniPathway" id="UPA00048">
    <property type="reaction ID" value="UER00072"/>
</dbReference>
<dbReference type="GO" id="GO:0005737">
    <property type="term" value="C:cytoplasm"/>
    <property type="evidence" value="ECO:0007669"/>
    <property type="project" value="UniProtKB-SubCell"/>
</dbReference>
<dbReference type="GO" id="GO:0003862">
    <property type="term" value="F:3-isopropylmalate dehydrogenase activity"/>
    <property type="evidence" value="ECO:0007669"/>
    <property type="project" value="UniProtKB-UniRule"/>
</dbReference>
<dbReference type="GO" id="GO:0000287">
    <property type="term" value="F:magnesium ion binding"/>
    <property type="evidence" value="ECO:0007669"/>
    <property type="project" value="InterPro"/>
</dbReference>
<dbReference type="GO" id="GO:0051287">
    <property type="term" value="F:NAD binding"/>
    <property type="evidence" value="ECO:0007669"/>
    <property type="project" value="InterPro"/>
</dbReference>
<dbReference type="GO" id="GO:0009098">
    <property type="term" value="P:L-leucine biosynthetic process"/>
    <property type="evidence" value="ECO:0007669"/>
    <property type="project" value="UniProtKB-UniRule"/>
</dbReference>
<dbReference type="Gene3D" id="3.40.718.10">
    <property type="entry name" value="Isopropylmalate Dehydrogenase"/>
    <property type="match status" value="1"/>
</dbReference>
<dbReference type="HAMAP" id="MF_01035">
    <property type="entry name" value="LeuB_type2"/>
    <property type="match status" value="1"/>
</dbReference>
<dbReference type="InterPro" id="IPR050501">
    <property type="entry name" value="ICDH/IPMDH"/>
</dbReference>
<dbReference type="InterPro" id="IPR019818">
    <property type="entry name" value="IsoCit/isopropylmalate_DH_CS"/>
</dbReference>
<dbReference type="InterPro" id="IPR024084">
    <property type="entry name" value="IsoPropMal-DH-like_dom"/>
</dbReference>
<dbReference type="InterPro" id="IPR023698">
    <property type="entry name" value="LeuB_actb"/>
</dbReference>
<dbReference type="NCBIfam" id="NF002898">
    <property type="entry name" value="PRK03437.1"/>
    <property type="match status" value="1"/>
</dbReference>
<dbReference type="PANTHER" id="PTHR43275">
    <property type="entry name" value="D-MALATE DEHYDROGENASE [DECARBOXYLATING]"/>
    <property type="match status" value="1"/>
</dbReference>
<dbReference type="PANTHER" id="PTHR43275:SF1">
    <property type="entry name" value="D-MALATE DEHYDROGENASE [DECARBOXYLATING]"/>
    <property type="match status" value="1"/>
</dbReference>
<dbReference type="Pfam" id="PF00180">
    <property type="entry name" value="Iso_dh"/>
    <property type="match status" value="1"/>
</dbReference>
<dbReference type="SMART" id="SM01329">
    <property type="entry name" value="Iso_dh"/>
    <property type="match status" value="1"/>
</dbReference>
<dbReference type="SUPFAM" id="SSF53659">
    <property type="entry name" value="Isocitrate/Isopropylmalate dehydrogenase-like"/>
    <property type="match status" value="1"/>
</dbReference>
<dbReference type="PROSITE" id="PS00470">
    <property type="entry name" value="IDH_IMDH"/>
    <property type="match status" value="1"/>
</dbReference>